<proteinExistence type="inferred from homology"/>
<organism>
    <name type="scientific">Staphylococcus epidermidis (strain ATCC 35984 / DSM 28319 / BCRC 17069 / CCUG 31568 / BM 3577 / RP62A)</name>
    <dbReference type="NCBI Taxonomy" id="176279"/>
    <lineage>
        <taxon>Bacteria</taxon>
        <taxon>Bacillati</taxon>
        <taxon>Bacillota</taxon>
        <taxon>Bacilli</taxon>
        <taxon>Bacillales</taxon>
        <taxon>Staphylococcaceae</taxon>
        <taxon>Staphylococcus</taxon>
    </lineage>
</organism>
<dbReference type="EC" id="3.5.1.28"/>
<dbReference type="EC" id="3.2.1.96"/>
<dbReference type="EMBL" id="CP000029">
    <property type="protein sequence ID" value="AAW53968.1"/>
    <property type="molecule type" value="Genomic_DNA"/>
</dbReference>
<dbReference type="RefSeq" id="WP_001831665.1">
    <property type="nucleotide sequence ID" value="NC_002976.3"/>
</dbReference>
<dbReference type="SMR" id="Q5HQB9"/>
<dbReference type="STRING" id="176279.SERP0636"/>
<dbReference type="CAZy" id="GH73">
    <property type="family name" value="Glycoside Hydrolase Family 73"/>
</dbReference>
<dbReference type="KEGG" id="ser:SERP0636"/>
<dbReference type="eggNOG" id="COG3266">
    <property type="taxonomic scope" value="Bacteria"/>
</dbReference>
<dbReference type="eggNOG" id="COG4193">
    <property type="taxonomic scope" value="Bacteria"/>
</dbReference>
<dbReference type="eggNOG" id="COG5632">
    <property type="taxonomic scope" value="Bacteria"/>
</dbReference>
<dbReference type="HOGENOM" id="CLU_005906_0_0_9"/>
<dbReference type="Proteomes" id="UP000000531">
    <property type="component" value="Chromosome"/>
</dbReference>
<dbReference type="GO" id="GO:0005576">
    <property type="term" value="C:extracellular region"/>
    <property type="evidence" value="ECO:0007669"/>
    <property type="project" value="UniProtKB-SubCell"/>
</dbReference>
<dbReference type="GO" id="GO:0004040">
    <property type="term" value="F:amidase activity"/>
    <property type="evidence" value="ECO:0007669"/>
    <property type="project" value="InterPro"/>
</dbReference>
<dbReference type="GO" id="GO:0033925">
    <property type="term" value="F:mannosyl-glycoprotein endo-beta-N-acetylglucosaminidase activity"/>
    <property type="evidence" value="ECO:0007669"/>
    <property type="project" value="UniProtKB-EC"/>
</dbReference>
<dbReference type="GO" id="GO:0008745">
    <property type="term" value="F:N-acetylmuramoyl-L-alanine amidase activity"/>
    <property type="evidence" value="ECO:0007669"/>
    <property type="project" value="UniProtKB-EC"/>
</dbReference>
<dbReference type="GO" id="GO:0071555">
    <property type="term" value="P:cell wall organization"/>
    <property type="evidence" value="ECO:0007669"/>
    <property type="project" value="UniProtKB-KW"/>
</dbReference>
<dbReference type="GO" id="GO:0009253">
    <property type="term" value="P:peptidoglycan catabolic process"/>
    <property type="evidence" value="ECO:0007669"/>
    <property type="project" value="InterPro"/>
</dbReference>
<dbReference type="CDD" id="cd06583">
    <property type="entry name" value="PGRP"/>
    <property type="match status" value="1"/>
</dbReference>
<dbReference type="FunFam" id="2.30.30.170:FF:000002">
    <property type="entry name" value="Bifunctional autolysin"/>
    <property type="match status" value="1"/>
</dbReference>
<dbReference type="Gene3D" id="2.30.30.170">
    <property type="match status" value="7"/>
</dbReference>
<dbReference type="Gene3D" id="3.40.80.10">
    <property type="entry name" value="Peptidoglycan recognition protein-like"/>
    <property type="match status" value="1"/>
</dbReference>
<dbReference type="InterPro" id="IPR036505">
    <property type="entry name" value="Amidase/PGRP_sf"/>
</dbReference>
<dbReference type="InterPro" id="IPR002502">
    <property type="entry name" value="Amidase_domain"/>
</dbReference>
<dbReference type="InterPro" id="IPR025987">
    <property type="entry name" value="GW_dom"/>
</dbReference>
<dbReference type="InterPro" id="IPR038200">
    <property type="entry name" value="GW_dom_sf"/>
</dbReference>
<dbReference type="InterPro" id="IPR002901">
    <property type="entry name" value="MGlyc_endo_b_GlcNAc-like_dom"/>
</dbReference>
<dbReference type="Pfam" id="PF01510">
    <property type="entry name" value="Amidase_2"/>
    <property type="match status" value="1"/>
</dbReference>
<dbReference type="Pfam" id="PF01832">
    <property type="entry name" value="Glucosaminidase"/>
    <property type="match status" value="1"/>
</dbReference>
<dbReference type="Pfam" id="PF13457">
    <property type="entry name" value="GW"/>
    <property type="match status" value="6"/>
</dbReference>
<dbReference type="SMART" id="SM00644">
    <property type="entry name" value="Ami_2"/>
    <property type="match status" value="1"/>
</dbReference>
<dbReference type="SMART" id="SM00047">
    <property type="entry name" value="LYZ2"/>
    <property type="match status" value="1"/>
</dbReference>
<dbReference type="SUPFAM" id="SSF55846">
    <property type="entry name" value="N-acetylmuramoyl-L-alanine amidase-like"/>
    <property type="match status" value="1"/>
</dbReference>
<dbReference type="PROSITE" id="PS51780">
    <property type="entry name" value="GW"/>
    <property type="match status" value="7"/>
</dbReference>
<evidence type="ECO:0000250" key="1"/>
<evidence type="ECO:0000255" key="2"/>
<evidence type="ECO:0000255" key="3">
    <source>
        <dbReference type="PROSITE-ProRule" id="PRU01116"/>
    </source>
</evidence>
<evidence type="ECO:0000256" key="4">
    <source>
        <dbReference type="SAM" id="MobiDB-lite"/>
    </source>
</evidence>
<evidence type="ECO:0000305" key="5"/>
<keyword id="KW-0961">Cell wall biogenesis/degradation</keyword>
<keyword id="KW-0378">Hydrolase</keyword>
<keyword id="KW-0511">Multifunctional enzyme</keyword>
<keyword id="KW-1185">Reference proteome</keyword>
<keyword id="KW-0677">Repeat</keyword>
<keyword id="KW-0964">Secreted</keyword>
<keyword id="KW-0732">Signal</keyword>
<gene>
    <name type="primary">atl</name>
    <name type="ordered locus">SERP0636</name>
</gene>
<feature type="signal peptide" evidence="2">
    <location>
        <begin position="1"/>
        <end position="29"/>
    </location>
</feature>
<feature type="chain" id="PRO_0000045480" description="Bifunctional autolysin">
    <location>
        <begin position="30"/>
        <end position="1335"/>
    </location>
</feature>
<feature type="domain" description="GW 1" evidence="3">
    <location>
        <begin position="533"/>
        <end position="610"/>
    </location>
</feature>
<feature type="domain" description="GW 2" evidence="3">
    <location>
        <begin position="612"/>
        <end position="686"/>
    </location>
</feature>
<feature type="domain" description="GW 3" evidence="3">
    <location>
        <begin position="700"/>
        <end position="774"/>
    </location>
</feature>
<feature type="domain" description="GW 4" evidence="3">
    <location>
        <begin position="776"/>
        <end position="850"/>
    </location>
</feature>
<feature type="domain" description="GW 5" evidence="3">
    <location>
        <begin position="868"/>
        <end position="943"/>
    </location>
</feature>
<feature type="domain" description="GW 6" evidence="3">
    <location>
        <begin position="945"/>
        <end position="1020"/>
    </location>
</feature>
<feature type="domain" description="GW 7" evidence="3">
    <location>
        <begin position="1023"/>
        <end position="1096"/>
    </location>
</feature>
<feature type="region of interest" description="Disordered" evidence="4">
    <location>
        <begin position="51"/>
        <end position="88"/>
    </location>
</feature>
<feature type="region of interest" description="Disordered" evidence="4">
    <location>
        <begin position="100"/>
        <end position="262"/>
    </location>
</feature>
<feature type="region of interest" description="N-acetylmuramoyl-L-alanine amidase">
    <location>
        <begin position="303"/>
        <end position="863"/>
    </location>
</feature>
<feature type="region of interest" description="Disordered" evidence="4">
    <location>
        <begin position="514"/>
        <end position="535"/>
    </location>
</feature>
<feature type="region of interest" description="Endo-beta-N-acetylglucosaminidase">
    <location>
        <begin position="864"/>
        <end position="1335"/>
    </location>
</feature>
<feature type="compositionally biased region" description="Polar residues" evidence="4">
    <location>
        <begin position="58"/>
        <end position="88"/>
    </location>
</feature>
<feature type="compositionally biased region" description="Polar residues" evidence="4">
    <location>
        <begin position="100"/>
        <end position="127"/>
    </location>
</feature>
<feature type="compositionally biased region" description="Polar residues" evidence="4">
    <location>
        <begin position="143"/>
        <end position="155"/>
    </location>
</feature>
<feature type="compositionally biased region" description="Polar residues" evidence="4">
    <location>
        <begin position="176"/>
        <end position="223"/>
    </location>
</feature>
<feature type="compositionally biased region" description="Polar residues" evidence="4">
    <location>
        <begin position="244"/>
        <end position="258"/>
    </location>
</feature>
<feature type="compositionally biased region" description="Low complexity" evidence="4">
    <location>
        <begin position="515"/>
        <end position="531"/>
    </location>
</feature>
<name>ATL_STAEQ</name>
<accession>Q5HQB9</accession>
<sequence length="1335" mass="148273">MAKKFNYKLPSMVALTLFGTAFTAHQANAAEQPQNQSNHKNVLDDQTALKQAEKAKSEVTQSTTNVSGTQTYQDPTQVQPKQDTQSTTYDASLDEMSTYNEISSNQKQQSLSTDDANQNQTNSVTKNQQEETNDLTQEDKTSTDTNQLQETQSVAKENEKDLGANANNEQQDKKMTASQPSENQAIETQTASNDNESQQKSQQVTSEQNETATPKVSNTNASGYNFDYDDEDDDSSTDHLEPISLNNVNATSKQTTSYKYKEPAQRVTTNTVKKETASNQATIDTKQFTPFSATAQPRTVYSVSSQKTSSLPKYTPKVNSSINNYIRKKNMKAPRIEEDYTSYFPKYGYRNGVGRPEGIVVHDTANDNSTIDGEIAFMKRNYTNAFVHAFVDGNRIIETAPTDYLSWGAGPYGNQRFINVEIVHTHDYDSFARSMNNYADYAATQLQYYNLKPDSAENDGRGTVWTHAAISNFLGGTDHADPHQYLRSHNYSYAELYDLIYEKYLIKTKQVAPWGTTSTKPSQPSKPSGGTNNKLTVSANRGVAQIKPTNNGLYTTVYDSKGHKTDQVQKTLSVTKTATLGNNKFYLVEDYNSGKKYGWVKQGDVVYNTAKAPVKVNQTYNVKAGSTLYTVPWGTPKQVASKVSGTGNQTFKATKQQQIDKATYLYGTVNGKSGWISKYYLTTASKPSNPTKPSTNNQLTVTNNSGVAQINAKNSGLYTTVYDTKGKTTNQIQRTLSVTKAATLGDKKFYLVGDYNTGTNYGWVKQDEVIYNTAKSPVKINQTYNVKPGVKLHTVPWGTYNQVAGTVSGKGDQTFKATKQQQIDKATYLYGTVNGKSGWISKYYLTAPSKVQALSTQSTPAPKQVKPSTQTVNQIAQVKANNSGIRASVYDKTAKSGTKYANRTFLINKQRTQGNNTYVLLQDGTSNTPLGWVNINDVTTQNIGKQTQSIGKYSVKPTNNGLYSIAWGTKNQQLLAPNTLANQAFNASKAVYVGKDLYLYGTVNNRTGWIAAKDLIQNSTDAQSTPYNYTFVINNSKSYFYMDPTKANRYSLKPYYEQTFTVIKQKNINGVKWYYGQLLDGKYVWIKSTDLVKEKIKYAYTGMTLNNAINIQSRLKYKPQVQNEPLKWSNANYSQIKNAMDTKRLANDSSLKYQFLRLDQPQYLSAQALNKLLKGKGVLENQGAAFSQAARKYGLNEIYLISHALVETGNGTSQLAKGGDVSKGKFTTKTGHKYHNVFGIGAFDNNALVDGIKYAKNAGWTSVSKAIIGGAKFIGNSYVKAGQNTLYKMRWNPANPGTHQYATDINWANVNAQVLKQFYDKIGEVGKYFEIPTYK</sequence>
<comment type="function">
    <text evidence="1">Endohydrolysis of the di-N-acetylchitobiosyl unit in high-mannose glycopeptides and glycoproteins containing the -[(Man)5(GlcNAc)2]-Asn structure. One N-acetyl-D-glucosamine residue remains attached to the protein; the rest of the oligosaccharide is released intact. Cleaves the peptidoglycan connecting the daughter cells at the end of the cell division cycle, resulting in the separation of the two newly divided cells. Acts as an autolysin in penicillin-induced lysis (By similarity).</text>
</comment>
<comment type="catalytic activity">
    <reaction>
        <text>Hydrolyzes the link between N-acetylmuramoyl residues and L-amino acid residues in certain cell-wall glycopeptides.</text>
        <dbReference type="EC" id="3.5.1.28"/>
    </reaction>
</comment>
<comment type="catalytic activity">
    <reaction>
        <text>an N(4)-(oligosaccharide-(1-&gt;3)-[oligosaccharide-(1-&gt;6)]-beta-D-Man-(1-&gt;4)-beta-D-GlcNAc-(1-&gt;4)-alpha-D-GlcNAc)-L-asparaginyl-[protein] + H2O = an oligosaccharide-(1-&gt;3)-[oligosaccharide-(1-&gt;6)]-beta-D-Man-(1-&gt;4)-D-GlcNAc + N(4)-(N-acetyl-beta-D-glucosaminyl)-L-asparaginyl-[protein]</text>
        <dbReference type="Rhea" id="RHEA:73067"/>
        <dbReference type="Rhea" id="RHEA-COMP:12603"/>
        <dbReference type="Rhea" id="RHEA-COMP:18176"/>
        <dbReference type="ChEBI" id="CHEBI:15377"/>
        <dbReference type="ChEBI" id="CHEBI:132248"/>
        <dbReference type="ChEBI" id="CHEBI:192714"/>
        <dbReference type="ChEBI" id="CHEBI:192715"/>
        <dbReference type="EC" id="3.2.1.96"/>
    </reaction>
</comment>
<comment type="subunit">
    <text evidence="1">Oligomer; forms a ring structure at the cell surface which is important for efficient partitioning of daughter cells after cell division.</text>
</comment>
<comment type="subcellular location">
    <subcellularLocation>
        <location evidence="1">Secreted</location>
    </subcellularLocation>
    <text evidence="1">Secreted, and then anchored on the cell surface at the peripheral cell wall above the completed septum (septal region), for the next cell division cycle.</text>
</comment>
<comment type="domain">
    <text evidence="1">The GW domains are responsible for directing the proteins to the septal region.</text>
</comment>
<comment type="PTM">
    <text evidence="1">Undergoes proteolytic processing to generate the two extracellular lytic enzymes, probably at the septal region on the cell surface.</text>
</comment>
<comment type="similarity">
    <text evidence="5">In the N-terminal section; belongs to the N-acetylmuramoyl-L-alanine amidase 2 family.</text>
</comment>
<comment type="similarity">
    <text evidence="5">In the C-terminal section; belongs to the glycosyl hydrolase 73 family.</text>
</comment>
<reference key="1">
    <citation type="journal article" date="2005" name="J. Bacteriol.">
        <title>Insights on evolution of virulence and resistance from the complete genome analysis of an early methicillin-resistant Staphylococcus aureus strain and a biofilm-producing methicillin-resistant Staphylococcus epidermidis strain.</title>
        <authorList>
            <person name="Gill S.R."/>
            <person name="Fouts D.E."/>
            <person name="Archer G.L."/>
            <person name="Mongodin E.F."/>
            <person name="DeBoy R.T."/>
            <person name="Ravel J."/>
            <person name="Paulsen I.T."/>
            <person name="Kolonay J.F."/>
            <person name="Brinkac L.M."/>
            <person name="Beanan M.J."/>
            <person name="Dodson R.J."/>
            <person name="Daugherty S.C."/>
            <person name="Madupu R."/>
            <person name="Angiuoli S.V."/>
            <person name="Durkin A.S."/>
            <person name="Haft D.H."/>
            <person name="Vamathevan J.J."/>
            <person name="Khouri H."/>
            <person name="Utterback T.R."/>
            <person name="Lee C."/>
            <person name="Dimitrov G."/>
            <person name="Jiang L."/>
            <person name="Qin H."/>
            <person name="Weidman J."/>
            <person name="Tran K."/>
            <person name="Kang K.H."/>
            <person name="Hance I.R."/>
            <person name="Nelson K.E."/>
            <person name="Fraser C.M."/>
        </authorList>
    </citation>
    <scope>NUCLEOTIDE SEQUENCE [LARGE SCALE GENOMIC DNA]</scope>
    <source>
        <strain>ATCC 35984 / DSM 28319 / BCRC 17069 / CCUG 31568 / BM 3577 / RP62A</strain>
    </source>
</reference>
<protein>
    <recommendedName>
        <fullName>Bifunctional autolysin</fullName>
    </recommendedName>
    <domain>
        <recommendedName>
            <fullName>N-acetylmuramoyl-L-alanine amidase</fullName>
            <ecNumber>3.5.1.28</ecNumber>
        </recommendedName>
    </domain>
    <domain>
        <recommendedName>
            <fullName>Mannosyl-glycoprotein endo-beta-N-acetylglucosaminidase</fullName>
            <ecNumber>3.2.1.96</ecNumber>
        </recommendedName>
    </domain>
</protein>